<dbReference type="EC" id="6.1.1.4" evidence="1"/>
<dbReference type="EMBL" id="CP000886">
    <property type="protein sequence ID" value="ABX68266.1"/>
    <property type="molecule type" value="Genomic_DNA"/>
</dbReference>
<dbReference type="RefSeq" id="WP_001157919.1">
    <property type="nucleotide sequence ID" value="NC_010102.1"/>
</dbReference>
<dbReference type="SMR" id="A9MUK3"/>
<dbReference type="KEGG" id="spq:SPAB_02902"/>
<dbReference type="PATRIC" id="fig|1016998.12.peg.2735"/>
<dbReference type="HOGENOM" id="CLU_004427_0_0_6"/>
<dbReference type="BioCyc" id="SENT1016998:SPAB_RS11820-MONOMER"/>
<dbReference type="Proteomes" id="UP000008556">
    <property type="component" value="Chromosome"/>
</dbReference>
<dbReference type="GO" id="GO:0005829">
    <property type="term" value="C:cytosol"/>
    <property type="evidence" value="ECO:0007669"/>
    <property type="project" value="TreeGrafter"/>
</dbReference>
<dbReference type="GO" id="GO:0002161">
    <property type="term" value="F:aminoacyl-tRNA deacylase activity"/>
    <property type="evidence" value="ECO:0007669"/>
    <property type="project" value="InterPro"/>
</dbReference>
<dbReference type="GO" id="GO:0005524">
    <property type="term" value="F:ATP binding"/>
    <property type="evidence" value="ECO:0007669"/>
    <property type="project" value="UniProtKB-UniRule"/>
</dbReference>
<dbReference type="GO" id="GO:0004823">
    <property type="term" value="F:leucine-tRNA ligase activity"/>
    <property type="evidence" value="ECO:0007669"/>
    <property type="project" value="UniProtKB-UniRule"/>
</dbReference>
<dbReference type="GO" id="GO:0006429">
    <property type="term" value="P:leucyl-tRNA aminoacylation"/>
    <property type="evidence" value="ECO:0007669"/>
    <property type="project" value="UniProtKB-UniRule"/>
</dbReference>
<dbReference type="CDD" id="cd07958">
    <property type="entry name" value="Anticodon_Ia_Leu_BEm"/>
    <property type="match status" value="1"/>
</dbReference>
<dbReference type="CDD" id="cd00812">
    <property type="entry name" value="LeuRS_core"/>
    <property type="match status" value="1"/>
</dbReference>
<dbReference type="FunFam" id="1.10.730.10:FF:000002">
    <property type="entry name" value="Leucine--tRNA ligase"/>
    <property type="match status" value="2"/>
</dbReference>
<dbReference type="FunFam" id="2.20.28.290:FF:000001">
    <property type="entry name" value="Leucine--tRNA ligase"/>
    <property type="match status" value="1"/>
</dbReference>
<dbReference type="FunFam" id="3.10.20.590:FF:000001">
    <property type="entry name" value="Leucine--tRNA ligase"/>
    <property type="match status" value="1"/>
</dbReference>
<dbReference type="FunFam" id="3.40.50.620:FF:000003">
    <property type="entry name" value="Leucine--tRNA ligase"/>
    <property type="match status" value="1"/>
</dbReference>
<dbReference type="FunFam" id="3.40.50.620:FF:000124">
    <property type="entry name" value="Leucine--tRNA ligase"/>
    <property type="match status" value="1"/>
</dbReference>
<dbReference type="Gene3D" id="2.20.28.290">
    <property type="match status" value="1"/>
</dbReference>
<dbReference type="Gene3D" id="3.10.20.590">
    <property type="match status" value="1"/>
</dbReference>
<dbReference type="Gene3D" id="3.40.50.620">
    <property type="entry name" value="HUPs"/>
    <property type="match status" value="1"/>
</dbReference>
<dbReference type="Gene3D" id="1.10.730.10">
    <property type="entry name" value="Isoleucyl-tRNA Synthetase, Domain 1"/>
    <property type="match status" value="1"/>
</dbReference>
<dbReference type="Gene3D" id="3.90.740.10">
    <property type="entry name" value="Valyl/Leucyl/Isoleucyl-tRNA synthetase, editing domain"/>
    <property type="match status" value="1"/>
</dbReference>
<dbReference type="HAMAP" id="MF_00049_B">
    <property type="entry name" value="Leu_tRNA_synth_B"/>
    <property type="match status" value="1"/>
</dbReference>
<dbReference type="InterPro" id="IPR001412">
    <property type="entry name" value="aa-tRNA-synth_I_CS"/>
</dbReference>
<dbReference type="InterPro" id="IPR002300">
    <property type="entry name" value="aa-tRNA-synth_Ia"/>
</dbReference>
<dbReference type="InterPro" id="IPR002302">
    <property type="entry name" value="Leu-tRNA-ligase"/>
</dbReference>
<dbReference type="InterPro" id="IPR025709">
    <property type="entry name" value="Leu_tRNA-synth_edit"/>
</dbReference>
<dbReference type="InterPro" id="IPR013155">
    <property type="entry name" value="M/V/L/I-tRNA-synth_anticd-bd"/>
</dbReference>
<dbReference type="InterPro" id="IPR015413">
    <property type="entry name" value="Methionyl/Leucyl_tRNA_Synth"/>
</dbReference>
<dbReference type="InterPro" id="IPR014729">
    <property type="entry name" value="Rossmann-like_a/b/a_fold"/>
</dbReference>
<dbReference type="InterPro" id="IPR009080">
    <property type="entry name" value="tRNAsynth_Ia_anticodon-bd"/>
</dbReference>
<dbReference type="InterPro" id="IPR009008">
    <property type="entry name" value="Val/Leu/Ile-tRNA-synth_edit"/>
</dbReference>
<dbReference type="NCBIfam" id="TIGR00396">
    <property type="entry name" value="leuS_bact"/>
    <property type="match status" value="1"/>
</dbReference>
<dbReference type="PANTHER" id="PTHR43740:SF2">
    <property type="entry name" value="LEUCINE--TRNA LIGASE, MITOCHONDRIAL"/>
    <property type="match status" value="1"/>
</dbReference>
<dbReference type="PANTHER" id="PTHR43740">
    <property type="entry name" value="LEUCYL-TRNA SYNTHETASE"/>
    <property type="match status" value="1"/>
</dbReference>
<dbReference type="Pfam" id="PF08264">
    <property type="entry name" value="Anticodon_1"/>
    <property type="match status" value="1"/>
</dbReference>
<dbReference type="Pfam" id="PF00133">
    <property type="entry name" value="tRNA-synt_1"/>
    <property type="match status" value="2"/>
</dbReference>
<dbReference type="Pfam" id="PF13603">
    <property type="entry name" value="tRNA-synt_1_2"/>
    <property type="match status" value="1"/>
</dbReference>
<dbReference type="Pfam" id="PF09334">
    <property type="entry name" value="tRNA-synt_1g"/>
    <property type="match status" value="1"/>
</dbReference>
<dbReference type="PRINTS" id="PR00985">
    <property type="entry name" value="TRNASYNTHLEU"/>
</dbReference>
<dbReference type="SUPFAM" id="SSF47323">
    <property type="entry name" value="Anticodon-binding domain of a subclass of class I aminoacyl-tRNA synthetases"/>
    <property type="match status" value="1"/>
</dbReference>
<dbReference type="SUPFAM" id="SSF52374">
    <property type="entry name" value="Nucleotidylyl transferase"/>
    <property type="match status" value="1"/>
</dbReference>
<dbReference type="SUPFAM" id="SSF50677">
    <property type="entry name" value="ValRS/IleRS/LeuRS editing domain"/>
    <property type="match status" value="1"/>
</dbReference>
<dbReference type="PROSITE" id="PS00178">
    <property type="entry name" value="AA_TRNA_LIGASE_I"/>
    <property type="match status" value="1"/>
</dbReference>
<keyword id="KW-0030">Aminoacyl-tRNA synthetase</keyword>
<keyword id="KW-0067">ATP-binding</keyword>
<keyword id="KW-0963">Cytoplasm</keyword>
<keyword id="KW-0436">Ligase</keyword>
<keyword id="KW-0547">Nucleotide-binding</keyword>
<keyword id="KW-0648">Protein biosynthesis</keyword>
<evidence type="ECO:0000255" key="1">
    <source>
        <dbReference type="HAMAP-Rule" id="MF_00049"/>
    </source>
</evidence>
<reference key="1">
    <citation type="submission" date="2007-11" db="EMBL/GenBank/DDBJ databases">
        <authorList>
            <consortium name="The Salmonella enterica serovar Paratyphi B Genome Sequencing Project"/>
            <person name="McClelland M."/>
            <person name="Sanderson E.K."/>
            <person name="Porwollik S."/>
            <person name="Spieth J."/>
            <person name="Clifton W.S."/>
            <person name="Fulton R."/>
            <person name="Cordes M."/>
            <person name="Wollam A."/>
            <person name="Shah N."/>
            <person name="Pepin K."/>
            <person name="Bhonagiri V."/>
            <person name="Nash W."/>
            <person name="Johnson M."/>
            <person name="Thiruvilangam P."/>
            <person name="Wilson R."/>
        </authorList>
    </citation>
    <scope>NUCLEOTIDE SEQUENCE [LARGE SCALE GENOMIC DNA]</scope>
    <source>
        <strain>ATCC BAA-1250 / SPB7</strain>
    </source>
</reference>
<organism>
    <name type="scientific">Salmonella paratyphi B (strain ATCC BAA-1250 / SPB7)</name>
    <dbReference type="NCBI Taxonomy" id="1016998"/>
    <lineage>
        <taxon>Bacteria</taxon>
        <taxon>Pseudomonadati</taxon>
        <taxon>Pseudomonadota</taxon>
        <taxon>Gammaproteobacteria</taxon>
        <taxon>Enterobacterales</taxon>
        <taxon>Enterobacteriaceae</taxon>
        <taxon>Salmonella</taxon>
    </lineage>
</organism>
<protein>
    <recommendedName>
        <fullName evidence="1">Leucine--tRNA ligase</fullName>
        <ecNumber evidence="1">6.1.1.4</ecNumber>
    </recommendedName>
    <alternativeName>
        <fullName evidence="1">Leucyl-tRNA synthetase</fullName>
        <shortName evidence="1">LeuRS</shortName>
    </alternativeName>
</protein>
<name>SYL_SALPB</name>
<comment type="catalytic activity">
    <reaction evidence="1">
        <text>tRNA(Leu) + L-leucine + ATP = L-leucyl-tRNA(Leu) + AMP + diphosphate</text>
        <dbReference type="Rhea" id="RHEA:11688"/>
        <dbReference type="Rhea" id="RHEA-COMP:9613"/>
        <dbReference type="Rhea" id="RHEA-COMP:9622"/>
        <dbReference type="ChEBI" id="CHEBI:30616"/>
        <dbReference type="ChEBI" id="CHEBI:33019"/>
        <dbReference type="ChEBI" id="CHEBI:57427"/>
        <dbReference type="ChEBI" id="CHEBI:78442"/>
        <dbReference type="ChEBI" id="CHEBI:78494"/>
        <dbReference type="ChEBI" id="CHEBI:456215"/>
        <dbReference type="EC" id="6.1.1.4"/>
    </reaction>
</comment>
<comment type="subcellular location">
    <subcellularLocation>
        <location evidence="1">Cytoplasm</location>
    </subcellularLocation>
</comment>
<comment type="similarity">
    <text evidence="1">Belongs to the class-I aminoacyl-tRNA synthetase family.</text>
</comment>
<gene>
    <name evidence="1" type="primary">leuS</name>
    <name type="ordered locus">SPAB_02902</name>
</gene>
<proteinExistence type="inferred from homology"/>
<accession>A9MUK3</accession>
<sequence>MQEQYRPEEIESKVQLHWDEKRTFEVTEDESKEKYYCLSMLPYPSGRLHMGHVRNYTIGDVVARYQRMLGKNVLQPIGWDAFGLPAEGAAVKNNTAPAPWTYDNIAYMKNQLKTLGFGYDWSREIATCTPEYYRWEQKFFTELYKKGLVYKKTSAVNWCPNDQTVLANEQVIDGCCWRCDTKVERKEIPQWFIKITAYADELLRDLDKLDHWPDTVKTMQRNWIGRSEGVEITFDVKGYDNTLTVYTTRPDTFMGATYLAVAAGHPLAQKAAANNAELAAFIDECRNTKVAEAEMATMEKKGVDTGYKAIHPLTGEEIPVWAANFVLMEYGTGAVMAVPGHDQRDYEFASKYGLTIKPVILAADGSEPDLSEQALTEKGVLFNSGEFDGLAFEAAFNAIADKLAEKGVGERKVNYRLRDWGVSRQRYWGAPIPMVTLEDGTVLPTPEDQLPVILPEDVVMDGITSPIKADPEWAKTTVNGMPALRETDTFDTFMESSWYYARYTCPQYQEGMLDSKAANYWLPVDIYIGGIEHAIMHLLYFRFFHKLMRDAGMVTSDEPAKQLLCQGMVLADAFYYVGENGERNWVSPVDAIVERDEKGRIVKAKDAAGHELVYTGMSKMSKSKNNGIDPQVMVERYGADTVRLFMMFASPADMTLEWQESGVEGANRFIKRVWKLVYEHTAKGSVAALNVDALSEDQKALRRDVHKTIAKVTDDIGRRQTFNTAIAAIMELMNKLAKAPQEGEQDRALLQEALQAVVRMLNPFTPHVCFTLWQELGGEGDIDNAPWPVADEQAMVENTTLVVVQVNGKVRGKITVAVDATEEQVRERAGQEHLVAKYLDGVTVRKVIYVPGKLLNLVVG</sequence>
<feature type="chain" id="PRO_1000074843" description="Leucine--tRNA ligase">
    <location>
        <begin position="1"/>
        <end position="860"/>
    </location>
</feature>
<feature type="short sequence motif" description="'HIGH' region">
    <location>
        <begin position="42"/>
        <end position="52"/>
    </location>
</feature>
<feature type="short sequence motif" description="'KMSKS' region">
    <location>
        <begin position="619"/>
        <end position="623"/>
    </location>
</feature>
<feature type="binding site" evidence="1">
    <location>
        <position position="622"/>
    </location>
    <ligand>
        <name>ATP</name>
        <dbReference type="ChEBI" id="CHEBI:30616"/>
    </ligand>
</feature>